<evidence type="ECO:0000255" key="1">
    <source>
        <dbReference type="HAMAP-Rule" id="MF_01588"/>
    </source>
</evidence>
<protein>
    <recommendedName>
        <fullName evidence="1">DNA ligase</fullName>
        <ecNumber evidence="1">6.5.1.2</ecNumber>
    </recommendedName>
    <alternativeName>
        <fullName evidence="1">Polydeoxyribonucleotide synthase [NAD(+)]</fullName>
    </alternativeName>
</protein>
<gene>
    <name evidence="1" type="primary">ligA</name>
    <name type="ordered locus">RrIowa_1307</name>
</gene>
<comment type="function">
    <text evidence="1">DNA ligase that catalyzes the formation of phosphodiester linkages between 5'-phosphoryl and 3'-hydroxyl groups in double-stranded DNA using NAD as a coenzyme and as the energy source for the reaction. It is essential for DNA replication and repair of damaged DNA.</text>
</comment>
<comment type="catalytic activity">
    <reaction evidence="1">
        <text>NAD(+) + (deoxyribonucleotide)n-3'-hydroxyl + 5'-phospho-(deoxyribonucleotide)m = (deoxyribonucleotide)n+m + AMP + beta-nicotinamide D-nucleotide.</text>
        <dbReference type="EC" id="6.5.1.2"/>
    </reaction>
</comment>
<comment type="cofactor">
    <cofactor evidence="1">
        <name>Mg(2+)</name>
        <dbReference type="ChEBI" id="CHEBI:18420"/>
    </cofactor>
    <cofactor evidence="1">
        <name>Mn(2+)</name>
        <dbReference type="ChEBI" id="CHEBI:29035"/>
    </cofactor>
</comment>
<comment type="similarity">
    <text evidence="1">Belongs to the NAD-dependent DNA ligase family. LigA subfamily.</text>
</comment>
<proteinExistence type="inferred from homology"/>
<reference key="1">
    <citation type="journal article" date="2008" name="Infect. Immun.">
        <title>Genomic comparison of virulent Rickettsia rickettsii Sheila Smith and avirulent Rickettsia rickettsii Iowa.</title>
        <authorList>
            <person name="Ellison D.W."/>
            <person name="Clark T.R."/>
            <person name="Sturdevant D.E."/>
            <person name="Virtaneva K."/>
            <person name="Porcella S.F."/>
            <person name="Hackstadt T."/>
        </authorList>
    </citation>
    <scope>NUCLEOTIDE SEQUENCE [LARGE SCALE GENOMIC DNA]</scope>
    <source>
        <strain>Iowa</strain>
    </source>
</reference>
<sequence length="689" mass="77851">MQNIDLISEEEAQKLLEELADKIAAYNHAYYIEDNPLVSDSEYDQLFNTNLKLEQKFPHLILENSPSKKVGAKIANKFAKVTHQVPMLSLSNAFDEQDVRDFVDRIKIFLRLNEFAPIFCEPKIDGVSFSAVYKHGVLTTGATRGDGYVGEDITANIKTIKNFPHKIDNVPEFLEVRGEIYIEKQDFLNLNKEQEEQGKDKFANPRNAAAGSLRQLDSSITAKRPLKYFVYSGGVTEQNLASSQDQLLTKLKECGFNINEISKLASSEEEIFAFYEYLKTNRENLPYEIDGVVYKLNDFALQNRMGFIARNPRFATAHKFPAIIGQTKLLSITVQVGRTGTLTPVAELEPIEIGGVTVSRATLHNFQEIARKDLRIKDYVFLQRAGDVIPKIMGVDFDKRPNDTETFDTPLFCLSCNSKLHYTPEDIIIRCDNGLNCPAQNYERIRHFVSKNAMDIEGLGRKQVEFLIDKGLISNPLDIFFLKEKNDSSLAKLENMDGWGKKSVENLFKNIEKSKNVSLPRFIYALGIRHIGEQNAKLLAREFGSYNNFIAQMELLRTNEPDIYQKLNNLEGIGDKILVDIIDFFDVKENIELIKKLGEILNIEDYKETREQSSLTDKIVVFTGSLPTISRAEAKATAEKLGAKVAVGVSSNTDLVVAGVDAGSKLKKAKELNIKIIDEEEWLTLIKNV</sequence>
<dbReference type="EC" id="6.5.1.2" evidence="1"/>
<dbReference type="EMBL" id="CP000766">
    <property type="protein sequence ID" value="ABY73051.1"/>
    <property type="molecule type" value="Genomic_DNA"/>
</dbReference>
<dbReference type="RefSeq" id="WP_012151229.1">
    <property type="nucleotide sequence ID" value="NC_010263.3"/>
</dbReference>
<dbReference type="SMR" id="B0BUZ1"/>
<dbReference type="GeneID" id="79937743"/>
<dbReference type="KEGG" id="rrj:RrIowa_1307"/>
<dbReference type="eggNOG" id="COG0272">
    <property type="taxonomic scope" value="Bacteria"/>
</dbReference>
<dbReference type="HOGENOM" id="CLU_007764_2_1_5"/>
<dbReference type="Proteomes" id="UP000000796">
    <property type="component" value="Chromosome"/>
</dbReference>
<dbReference type="GO" id="GO:0005829">
    <property type="term" value="C:cytosol"/>
    <property type="evidence" value="ECO:0007669"/>
    <property type="project" value="TreeGrafter"/>
</dbReference>
<dbReference type="GO" id="GO:0003911">
    <property type="term" value="F:DNA ligase (NAD+) activity"/>
    <property type="evidence" value="ECO:0007669"/>
    <property type="project" value="UniProtKB-UniRule"/>
</dbReference>
<dbReference type="GO" id="GO:0046872">
    <property type="term" value="F:metal ion binding"/>
    <property type="evidence" value="ECO:0007669"/>
    <property type="project" value="UniProtKB-KW"/>
</dbReference>
<dbReference type="GO" id="GO:0006281">
    <property type="term" value="P:DNA repair"/>
    <property type="evidence" value="ECO:0007669"/>
    <property type="project" value="UniProtKB-KW"/>
</dbReference>
<dbReference type="GO" id="GO:0006260">
    <property type="term" value="P:DNA replication"/>
    <property type="evidence" value="ECO:0007669"/>
    <property type="project" value="UniProtKB-KW"/>
</dbReference>
<dbReference type="CDD" id="cd17748">
    <property type="entry name" value="BRCT_DNA_ligase_like"/>
    <property type="match status" value="1"/>
</dbReference>
<dbReference type="CDD" id="cd00114">
    <property type="entry name" value="LIGANc"/>
    <property type="match status" value="1"/>
</dbReference>
<dbReference type="FunFam" id="1.10.150.20:FF:000007">
    <property type="entry name" value="DNA ligase"/>
    <property type="match status" value="1"/>
</dbReference>
<dbReference type="FunFam" id="2.40.50.140:FF:000012">
    <property type="entry name" value="DNA ligase"/>
    <property type="match status" value="1"/>
</dbReference>
<dbReference type="FunFam" id="3.30.470.30:FF:000001">
    <property type="entry name" value="DNA ligase"/>
    <property type="match status" value="1"/>
</dbReference>
<dbReference type="Gene3D" id="1.10.150.20">
    <property type="entry name" value="5' to 3' exonuclease, C-terminal subdomain"/>
    <property type="match status" value="2"/>
</dbReference>
<dbReference type="Gene3D" id="3.40.50.10190">
    <property type="entry name" value="BRCT domain"/>
    <property type="match status" value="1"/>
</dbReference>
<dbReference type="Gene3D" id="3.30.470.30">
    <property type="entry name" value="DNA ligase/mRNA capping enzyme"/>
    <property type="match status" value="1"/>
</dbReference>
<dbReference type="Gene3D" id="1.10.287.610">
    <property type="entry name" value="Helix hairpin bin"/>
    <property type="match status" value="1"/>
</dbReference>
<dbReference type="Gene3D" id="2.40.50.140">
    <property type="entry name" value="Nucleic acid-binding proteins"/>
    <property type="match status" value="1"/>
</dbReference>
<dbReference type="HAMAP" id="MF_01588">
    <property type="entry name" value="DNA_ligase_A"/>
    <property type="match status" value="1"/>
</dbReference>
<dbReference type="InterPro" id="IPR001357">
    <property type="entry name" value="BRCT_dom"/>
</dbReference>
<dbReference type="InterPro" id="IPR036420">
    <property type="entry name" value="BRCT_dom_sf"/>
</dbReference>
<dbReference type="InterPro" id="IPR041663">
    <property type="entry name" value="DisA/LigA_HHH"/>
</dbReference>
<dbReference type="InterPro" id="IPR001679">
    <property type="entry name" value="DNA_ligase"/>
</dbReference>
<dbReference type="InterPro" id="IPR018239">
    <property type="entry name" value="DNA_ligase_AS"/>
</dbReference>
<dbReference type="InterPro" id="IPR033136">
    <property type="entry name" value="DNA_ligase_CS"/>
</dbReference>
<dbReference type="InterPro" id="IPR013839">
    <property type="entry name" value="DNAligase_adenylation"/>
</dbReference>
<dbReference type="InterPro" id="IPR013840">
    <property type="entry name" value="DNAligase_N"/>
</dbReference>
<dbReference type="InterPro" id="IPR012340">
    <property type="entry name" value="NA-bd_OB-fold"/>
</dbReference>
<dbReference type="InterPro" id="IPR004150">
    <property type="entry name" value="NAD_DNA_ligase_OB"/>
</dbReference>
<dbReference type="InterPro" id="IPR010994">
    <property type="entry name" value="RuvA_2-like"/>
</dbReference>
<dbReference type="NCBIfam" id="TIGR00575">
    <property type="entry name" value="dnlj"/>
    <property type="match status" value="1"/>
</dbReference>
<dbReference type="NCBIfam" id="NF005932">
    <property type="entry name" value="PRK07956.1"/>
    <property type="match status" value="1"/>
</dbReference>
<dbReference type="PANTHER" id="PTHR23389">
    <property type="entry name" value="CHROMOSOME TRANSMISSION FIDELITY FACTOR 18"/>
    <property type="match status" value="1"/>
</dbReference>
<dbReference type="PANTHER" id="PTHR23389:SF9">
    <property type="entry name" value="DNA LIGASE"/>
    <property type="match status" value="1"/>
</dbReference>
<dbReference type="Pfam" id="PF00533">
    <property type="entry name" value="BRCT"/>
    <property type="match status" value="1"/>
</dbReference>
<dbReference type="Pfam" id="PF01653">
    <property type="entry name" value="DNA_ligase_aden"/>
    <property type="match status" value="1"/>
</dbReference>
<dbReference type="Pfam" id="PF03120">
    <property type="entry name" value="DNA_ligase_OB"/>
    <property type="match status" value="1"/>
</dbReference>
<dbReference type="Pfam" id="PF12826">
    <property type="entry name" value="HHH_2"/>
    <property type="match status" value="1"/>
</dbReference>
<dbReference type="PIRSF" id="PIRSF001604">
    <property type="entry name" value="LigA"/>
    <property type="match status" value="1"/>
</dbReference>
<dbReference type="SMART" id="SM00292">
    <property type="entry name" value="BRCT"/>
    <property type="match status" value="1"/>
</dbReference>
<dbReference type="SMART" id="SM00532">
    <property type="entry name" value="LIGANc"/>
    <property type="match status" value="1"/>
</dbReference>
<dbReference type="SUPFAM" id="SSF52113">
    <property type="entry name" value="BRCT domain"/>
    <property type="match status" value="1"/>
</dbReference>
<dbReference type="SUPFAM" id="SSF56091">
    <property type="entry name" value="DNA ligase/mRNA capping enzyme, catalytic domain"/>
    <property type="match status" value="1"/>
</dbReference>
<dbReference type="SUPFAM" id="SSF50249">
    <property type="entry name" value="Nucleic acid-binding proteins"/>
    <property type="match status" value="1"/>
</dbReference>
<dbReference type="SUPFAM" id="SSF47781">
    <property type="entry name" value="RuvA domain 2-like"/>
    <property type="match status" value="1"/>
</dbReference>
<dbReference type="PROSITE" id="PS50172">
    <property type="entry name" value="BRCT"/>
    <property type="match status" value="1"/>
</dbReference>
<dbReference type="PROSITE" id="PS01055">
    <property type="entry name" value="DNA_LIGASE_N1"/>
    <property type="match status" value="1"/>
</dbReference>
<dbReference type="PROSITE" id="PS01056">
    <property type="entry name" value="DNA_LIGASE_N2"/>
    <property type="match status" value="1"/>
</dbReference>
<keyword id="KW-0227">DNA damage</keyword>
<keyword id="KW-0234">DNA repair</keyword>
<keyword id="KW-0235">DNA replication</keyword>
<keyword id="KW-0436">Ligase</keyword>
<keyword id="KW-0460">Magnesium</keyword>
<keyword id="KW-0464">Manganese</keyword>
<keyword id="KW-0479">Metal-binding</keyword>
<keyword id="KW-0520">NAD</keyword>
<keyword id="KW-0862">Zinc</keyword>
<accession>B0BUZ1</accession>
<name>DNLJ_RICRO</name>
<feature type="chain" id="PRO_0000340373" description="DNA ligase">
    <location>
        <begin position="1"/>
        <end position="689"/>
    </location>
</feature>
<feature type="domain" description="BRCT" evidence="1">
    <location>
        <begin position="610"/>
        <end position="689"/>
    </location>
</feature>
<feature type="active site" description="N6-AMP-lysine intermediate" evidence="1">
    <location>
        <position position="123"/>
    </location>
</feature>
<feature type="binding site" evidence="1">
    <location>
        <begin position="40"/>
        <end position="44"/>
    </location>
    <ligand>
        <name>NAD(+)</name>
        <dbReference type="ChEBI" id="CHEBI:57540"/>
    </ligand>
</feature>
<feature type="binding site" evidence="1">
    <location>
        <begin position="89"/>
        <end position="90"/>
    </location>
    <ligand>
        <name>NAD(+)</name>
        <dbReference type="ChEBI" id="CHEBI:57540"/>
    </ligand>
</feature>
<feature type="binding site" evidence="1">
    <location>
        <position position="121"/>
    </location>
    <ligand>
        <name>NAD(+)</name>
        <dbReference type="ChEBI" id="CHEBI:57540"/>
    </ligand>
</feature>
<feature type="binding site" evidence="1">
    <location>
        <position position="144"/>
    </location>
    <ligand>
        <name>NAD(+)</name>
        <dbReference type="ChEBI" id="CHEBI:57540"/>
    </ligand>
</feature>
<feature type="binding site" evidence="1">
    <location>
        <position position="179"/>
    </location>
    <ligand>
        <name>NAD(+)</name>
        <dbReference type="ChEBI" id="CHEBI:57540"/>
    </ligand>
</feature>
<feature type="binding site" evidence="1">
    <location>
        <position position="295"/>
    </location>
    <ligand>
        <name>NAD(+)</name>
        <dbReference type="ChEBI" id="CHEBI:57540"/>
    </ligand>
</feature>
<feature type="binding site" evidence="1">
    <location>
        <position position="319"/>
    </location>
    <ligand>
        <name>NAD(+)</name>
        <dbReference type="ChEBI" id="CHEBI:57540"/>
    </ligand>
</feature>
<feature type="binding site" evidence="1">
    <location>
        <position position="413"/>
    </location>
    <ligand>
        <name>Zn(2+)</name>
        <dbReference type="ChEBI" id="CHEBI:29105"/>
    </ligand>
</feature>
<feature type="binding site" evidence="1">
    <location>
        <position position="416"/>
    </location>
    <ligand>
        <name>Zn(2+)</name>
        <dbReference type="ChEBI" id="CHEBI:29105"/>
    </ligand>
</feature>
<feature type="binding site" evidence="1">
    <location>
        <position position="431"/>
    </location>
    <ligand>
        <name>Zn(2+)</name>
        <dbReference type="ChEBI" id="CHEBI:29105"/>
    </ligand>
</feature>
<feature type="binding site" evidence="1">
    <location>
        <position position="437"/>
    </location>
    <ligand>
        <name>Zn(2+)</name>
        <dbReference type="ChEBI" id="CHEBI:29105"/>
    </ligand>
</feature>
<organism>
    <name type="scientific">Rickettsia rickettsii (strain Iowa)</name>
    <dbReference type="NCBI Taxonomy" id="452659"/>
    <lineage>
        <taxon>Bacteria</taxon>
        <taxon>Pseudomonadati</taxon>
        <taxon>Pseudomonadota</taxon>
        <taxon>Alphaproteobacteria</taxon>
        <taxon>Rickettsiales</taxon>
        <taxon>Rickettsiaceae</taxon>
        <taxon>Rickettsieae</taxon>
        <taxon>Rickettsia</taxon>
        <taxon>spotted fever group</taxon>
    </lineage>
</organism>